<keyword id="KW-0025">Alternative splicing</keyword>
<keyword id="KW-0121">Carboxypeptidase</keyword>
<keyword id="KW-0966">Cell projection</keyword>
<keyword id="KW-0963">Cytoplasm</keyword>
<keyword id="KW-0206">Cytoskeleton</keyword>
<keyword id="KW-0333">Golgi apparatus</keyword>
<keyword id="KW-0378">Hydrolase</keyword>
<keyword id="KW-0479">Metal-binding</keyword>
<keyword id="KW-0482">Metalloprotease</keyword>
<keyword id="KW-0645">Protease</keyword>
<keyword id="KW-1267">Proteomics identification</keyword>
<keyword id="KW-1185">Reference proteome</keyword>
<keyword id="KW-0862">Zinc</keyword>
<accession>Q5VU57</accession>
<accession>B3KT26</accession>
<accession>B4DG37</accession>
<proteinExistence type="evidence at protein level"/>
<comment type="function">
    <text evidence="3 7">Metallocarboxypeptidase that mediates protein deglutamylation of tubulin and non-tubulin target proteins. Catalyzes the removal of polyglutamate side chains present on the gamma-carboxyl group of glutamate residues within the C-terminal tail of tubulin protein. Specifically cleaves tubulin long-side-chains, while it is not able to remove the branching point glutamate. Also catalyzes the removal of polyglutamate residues from the carboxy-terminus of non-tubulin proteins such as MYLK. Mediates the deglutamylation of nucleotidyltransferase CGAS, leading to CGAS antiviral defense response activation (By similarity). Involved in KLF4 deglutamylation which promotes KLF4 proteasome-mediated degradation, thereby negatively regulating cell pluripotency maintenance and embryogenesis (PubMed:29593216).</text>
</comment>
<comment type="catalytic activity">
    <reaction evidence="3">
        <text>(L-glutamyl)(n+1)-gamma-L-glutamyl-L-glutamyl-[protein] + H2O = (L-glutamyl)(n)-gamma-L-glutamyl-L-glutamyl-[protein] + L-glutamate</text>
        <dbReference type="Rhea" id="RHEA:60004"/>
        <dbReference type="Rhea" id="RHEA-COMP:15519"/>
        <dbReference type="Rhea" id="RHEA-COMP:15675"/>
        <dbReference type="ChEBI" id="CHEBI:15377"/>
        <dbReference type="ChEBI" id="CHEBI:29985"/>
        <dbReference type="ChEBI" id="CHEBI:143623"/>
    </reaction>
    <physiologicalReaction direction="left-to-right" evidence="3">
        <dbReference type="Rhea" id="RHEA:60005"/>
    </physiologicalReaction>
</comment>
<comment type="catalytic activity">
    <reaction evidence="3">
        <text>C-terminal L-alpha-aminoacyl-L-glutamyl-L-glutamyl-[tubulin] + H2O = C-terminal L-alpha-aminoacyl-L-glutamyl-[tubulin] + L-glutamate</text>
        <dbReference type="Rhea" id="RHEA:63792"/>
        <dbReference type="Rhea" id="RHEA-COMP:16435"/>
        <dbReference type="Rhea" id="RHEA-COMP:16436"/>
        <dbReference type="ChEBI" id="CHEBI:15377"/>
        <dbReference type="ChEBI" id="CHEBI:29985"/>
        <dbReference type="ChEBI" id="CHEBI:149555"/>
        <dbReference type="ChEBI" id="CHEBI:149556"/>
        <dbReference type="EC" id="3.4.17.24"/>
    </reaction>
    <physiologicalReaction direction="left-to-right" evidence="3">
        <dbReference type="Rhea" id="RHEA:63793"/>
    </physiologicalReaction>
</comment>
<comment type="cofactor">
    <cofactor evidence="2">
        <name>Zn(2+)</name>
        <dbReference type="ChEBI" id="CHEBI:29105"/>
    </cofactor>
    <text evidence="2">Binds 1 zinc ion per subunit.</text>
</comment>
<comment type="subunit">
    <text evidence="1">Interacts with MYLK.</text>
</comment>
<comment type="subcellular location">
    <subcellularLocation>
        <location evidence="3">Cytoplasm</location>
        <location evidence="3">Cytosol</location>
    </subcellularLocation>
    <subcellularLocation>
        <location evidence="6">Cytoplasm</location>
        <location evidence="6">Cytoskeleton</location>
        <location evidence="6">Microtubule organizing center</location>
        <location evidence="6">Centrosome</location>
        <location evidence="6">Centriole</location>
    </subcellularLocation>
    <subcellularLocation>
        <location evidence="6">Golgi apparatus</location>
    </subcellularLocation>
    <subcellularLocation>
        <location evidence="6">Cytoplasm</location>
        <location evidence="6">Cytoskeleton</location>
        <location evidence="6">Cilium basal body</location>
    </subcellularLocation>
    <text evidence="6">Colocalizes with gamma-tubulin in the centrioles at interphase and dividing cells and with glutamylated tubulin in basal bodies of ciliated cells.</text>
</comment>
<comment type="alternative products">
    <event type="alternative splicing"/>
    <isoform>
        <id>Q5VU57-1</id>
        <name>1</name>
        <sequence type="displayed"/>
    </isoform>
    <isoform>
        <id>Q5VU57-2</id>
        <name>2</name>
        <sequence type="described" ref="VSP_040435 VSP_040436"/>
    </isoform>
</comment>
<comment type="similarity">
    <text evidence="9">Belongs to the peptidase M14 family.</text>
</comment>
<comment type="sequence caution" evidence="9">
    <conflict type="frameshift">
        <sequence resource="EMBL-CDS" id="BAG52938"/>
    </conflict>
</comment>
<comment type="sequence caution" evidence="9">
    <conflict type="frameshift">
        <sequence resource="EMBL-CDS" id="BAG57648"/>
    </conflict>
</comment>
<protein>
    <recommendedName>
        <fullName evidence="3">Cytosolic carboxypeptidase 6</fullName>
        <ecNumber evidence="3">3.4.17.24</ecNumber>
    </recommendedName>
    <alternativeName>
        <fullName>ATP/GTP-binding protein-like 4</fullName>
    </alternativeName>
    <alternativeName>
        <fullName evidence="9">Protein deglutamylase CCP6</fullName>
    </alternativeName>
</protein>
<evidence type="ECO:0000250" key="1"/>
<evidence type="ECO:0000250" key="2">
    <source>
        <dbReference type="UniProtKB" id="P00730"/>
    </source>
</evidence>
<evidence type="ECO:0000250" key="3">
    <source>
        <dbReference type="UniProtKB" id="Q09LZ8"/>
    </source>
</evidence>
<evidence type="ECO:0000255" key="4">
    <source>
        <dbReference type="PROSITE-ProRule" id="PRU01379"/>
    </source>
</evidence>
<evidence type="ECO:0000256" key="5">
    <source>
        <dbReference type="SAM" id="MobiDB-lite"/>
    </source>
</evidence>
<evidence type="ECO:0000269" key="6">
    <source>
    </source>
</evidence>
<evidence type="ECO:0000269" key="7">
    <source>
    </source>
</evidence>
<evidence type="ECO:0000303" key="8">
    <source>
    </source>
</evidence>
<evidence type="ECO:0000305" key="9"/>
<evidence type="ECO:0000312" key="10">
    <source>
        <dbReference type="HGNC" id="HGNC:25892"/>
    </source>
</evidence>
<organism>
    <name type="scientific">Homo sapiens</name>
    <name type="common">Human</name>
    <dbReference type="NCBI Taxonomy" id="9606"/>
    <lineage>
        <taxon>Eukaryota</taxon>
        <taxon>Metazoa</taxon>
        <taxon>Chordata</taxon>
        <taxon>Craniata</taxon>
        <taxon>Vertebrata</taxon>
        <taxon>Euteleostomi</taxon>
        <taxon>Mammalia</taxon>
        <taxon>Eutheria</taxon>
        <taxon>Euarchontoglires</taxon>
        <taxon>Primates</taxon>
        <taxon>Haplorrhini</taxon>
        <taxon>Catarrhini</taxon>
        <taxon>Hominidae</taxon>
        <taxon>Homo</taxon>
    </lineage>
</organism>
<sequence>MAEGSQSAPEAGNDMGNDDAIGGNVSKYIVLPTGYCGQPKKGHLIFDACFESGNLGRVDQVSEFEYDLFIRPDTCNPRFRVWFNFTVENVKESQRVIFNIVNFSKTKSLYRDGMAPMVKSTSRPKWQRLPPKNVYYYRCPDHRKNYVMSFAFCFDREEDIYQFAYCYPYTYTRFQHYLDSLQKRNMDYFFREQLGQSVQQRKLDLLTITSPDNLREGAEQKVVFITGRVHPGETPSSFVCQGIIDFLVSQHPIACVLREYLVFKIAPMLNPDGVYLGNYRCSLMGFDLNRHWLDPSPWVHPTLHGVKQLIVQMYNDPKTSLEFYIDIHAHSTMMNGFMYGNIFEDEERFQRQAIFPKLLCQNAEDFSYSSTSFNRDAVKAGTGRRFLGGLLDHTSYCYTLEVSFYSYIISGTTAAVPYTEEAYMKLGRNVARTFLDYYRLNPVVEKVAIPMPRLRNKEIEVQRRKEKSPPYKHPLLRGPASNYPNSKGDKKSSVNHKDPSTPF</sequence>
<gene>
    <name evidence="10" type="primary">AGBL4</name>
    <name type="synonym">CCP6</name>
</gene>
<name>CBPC6_HUMAN</name>
<dbReference type="EC" id="3.4.17.24" evidence="3"/>
<dbReference type="EMBL" id="AK094826">
    <property type="protein sequence ID" value="BAG52938.1"/>
    <property type="status" value="ALT_FRAME"/>
    <property type="molecule type" value="mRNA"/>
</dbReference>
<dbReference type="EMBL" id="AK294394">
    <property type="protein sequence ID" value="BAG57648.1"/>
    <property type="status" value="ALT_FRAME"/>
    <property type="molecule type" value="mRNA"/>
</dbReference>
<dbReference type="EMBL" id="AC099788">
    <property type="status" value="NOT_ANNOTATED_CDS"/>
    <property type="molecule type" value="Genomic_DNA"/>
</dbReference>
<dbReference type="EMBL" id="AL355809">
    <property type="status" value="NOT_ANNOTATED_CDS"/>
    <property type="molecule type" value="Genomic_DNA"/>
</dbReference>
<dbReference type="EMBL" id="AL390023">
    <property type="status" value="NOT_ANNOTATED_CDS"/>
    <property type="molecule type" value="Genomic_DNA"/>
</dbReference>
<dbReference type="EMBL" id="AL391844">
    <property type="status" value="NOT_ANNOTATED_CDS"/>
    <property type="molecule type" value="Genomic_DNA"/>
</dbReference>
<dbReference type="EMBL" id="AL590432">
    <property type="status" value="NOT_ANNOTATED_CDS"/>
    <property type="molecule type" value="Genomic_DNA"/>
</dbReference>
<dbReference type="EMBL" id="AL591602">
    <property type="status" value="NOT_ANNOTATED_CDS"/>
    <property type="molecule type" value="Genomic_DNA"/>
</dbReference>
<dbReference type="EMBL" id="AL645507">
    <property type="status" value="NOT_ANNOTATED_CDS"/>
    <property type="molecule type" value="Genomic_DNA"/>
</dbReference>
<dbReference type="EMBL" id="AL645730">
    <property type="status" value="NOT_ANNOTATED_CDS"/>
    <property type="molecule type" value="Genomic_DNA"/>
</dbReference>
<dbReference type="CCDS" id="CCDS44137.1">
    <molecule id="Q5VU57-1"/>
</dbReference>
<dbReference type="RefSeq" id="NP_001310502.1">
    <molecule id="Q5VU57-2"/>
    <property type="nucleotide sequence ID" value="NM_001323573.2"/>
</dbReference>
<dbReference type="RefSeq" id="NP_116174.3">
    <molecule id="Q5VU57-1"/>
    <property type="nucleotide sequence ID" value="NM_032785.4"/>
</dbReference>
<dbReference type="SMR" id="Q5VU57"/>
<dbReference type="BioGRID" id="124316">
    <property type="interactions" value="69"/>
</dbReference>
<dbReference type="FunCoup" id="Q5VU57">
    <property type="interactions" value="89"/>
</dbReference>
<dbReference type="IntAct" id="Q5VU57">
    <property type="interactions" value="32"/>
</dbReference>
<dbReference type="MINT" id="Q5VU57"/>
<dbReference type="STRING" id="9606.ENSP00000360905"/>
<dbReference type="ChEMBL" id="CHEMBL4523328"/>
<dbReference type="MEROPS" id="M14.027"/>
<dbReference type="iPTMnet" id="Q5VU57"/>
<dbReference type="PhosphoSitePlus" id="Q5VU57"/>
<dbReference type="BioMuta" id="AGBL4"/>
<dbReference type="DMDM" id="317373463"/>
<dbReference type="jPOST" id="Q5VU57"/>
<dbReference type="MassIVE" id="Q5VU57"/>
<dbReference type="PaxDb" id="9606-ENSP00000360905"/>
<dbReference type="PeptideAtlas" id="Q5VU57"/>
<dbReference type="ProteomicsDB" id="65385">
    <molecule id="Q5VU57-1"/>
</dbReference>
<dbReference type="ProteomicsDB" id="65386">
    <molecule id="Q5VU57-2"/>
</dbReference>
<dbReference type="Antibodypedia" id="52065">
    <property type="antibodies" value="61 antibodies from 19 providers"/>
</dbReference>
<dbReference type="DNASU" id="84871"/>
<dbReference type="Ensembl" id="ENST00000371839.6">
    <molecule id="Q5VU57-1"/>
    <property type="protein sequence ID" value="ENSP00000360905.1"/>
    <property type="gene ID" value="ENSG00000186094.18"/>
</dbReference>
<dbReference type="GeneID" id="84871"/>
<dbReference type="KEGG" id="hsa:84871"/>
<dbReference type="MANE-Select" id="ENST00000371839.6">
    <property type="protein sequence ID" value="ENSP00000360905.1"/>
    <property type="RefSeq nucleotide sequence ID" value="NM_032785.4"/>
    <property type="RefSeq protein sequence ID" value="NP_116174.3"/>
</dbReference>
<dbReference type="UCSC" id="uc001cru.3">
    <molecule id="Q5VU57-1"/>
    <property type="organism name" value="human"/>
</dbReference>
<dbReference type="AGR" id="HGNC:25892"/>
<dbReference type="CTD" id="84871"/>
<dbReference type="DisGeNET" id="84871"/>
<dbReference type="GeneCards" id="AGBL4"/>
<dbReference type="HGNC" id="HGNC:25892">
    <property type="gene designation" value="AGBL4"/>
</dbReference>
<dbReference type="HPA" id="ENSG00000186094">
    <property type="expression patterns" value="Tissue enhanced (brain, retina)"/>
</dbReference>
<dbReference type="MalaCards" id="AGBL4"/>
<dbReference type="MIM" id="616476">
    <property type="type" value="gene"/>
</dbReference>
<dbReference type="neXtProt" id="NX_Q5VU57"/>
<dbReference type="OpenTargets" id="ENSG00000186094"/>
<dbReference type="PharmGKB" id="PA142672636"/>
<dbReference type="VEuPathDB" id="HostDB:ENSG00000186094"/>
<dbReference type="eggNOG" id="KOG3641">
    <property type="taxonomic scope" value="Eukaryota"/>
</dbReference>
<dbReference type="GeneTree" id="ENSGT00940000155042"/>
<dbReference type="HOGENOM" id="CLU_007523_6_1_1"/>
<dbReference type="InParanoid" id="Q5VU57"/>
<dbReference type="OMA" id="LRLWFNF"/>
<dbReference type="OrthoDB" id="10253041at2759"/>
<dbReference type="PAN-GO" id="Q5VU57">
    <property type="GO annotations" value="0 GO annotations based on evolutionary models"/>
</dbReference>
<dbReference type="PhylomeDB" id="Q5VU57"/>
<dbReference type="TreeFam" id="TF333009"/>
<dbReference type="PathwayCommons" id="Q5VU57"/>
<dbReference type="Reactome" id="R-HSA-8955332">
    <property type="pathway name" value="Carboxyterminal post-translational modifications of tubulin"/>
</dbReference>
<dbReference type="BioGRID-ORCS" id="84871">
    <property type="hits" value="37 hits in 1146 CRISPR screens"/>
</dbReference>
<dbReference type="ChiTaRS" id="AGBL4">
    <property type="organism name" value="human"/>
</dbReference>
<dbReference type="GenomeRNAi" id="84871"/>
<dbReference type="Pharos" id="Q5VU57">
    <property type="development level" value="Tbio"/>
</dbReference>
<dbReference type="PRO" id="PR:Q5VU57"/>
<dbReference type="Proteomes" id="UP000005640">
    <property type="component" value="Chromosome 1"/>
</dbReference>
<dbReference type="RNAct" id="Q5VU57">
    <property type="molecule type" value="protein"/>
</dbReference>
<dbReference type="Bgee" id="ENSG00000186094">
    <property type="expression patterns" value="Expressed in buccal mucosa cell and 102 other cell types or tissues"/>
</dbReference>
<dbReference type="ExpressionAtlas" id="Q5VU57">
    <property type="expression patterns" value="baseline and differential"/>
</dbReference>
<dbReference type="GO" id="GO:1904115">
    <property type="term" value="C:axon cytoplasm"/>
    <property type="evidence" value="ECO:0007669"/>
    <property type="project" value="GOC"/>
</dbReference>
<dbReference type="GO" id="GO:0005814">
    <property type="term" value="C:centriole"/>
    <property type="evidence" value="ECO:0000314"/>
    <property type="project" value="UniProtKB"/>
</dbReference>
<dbReference type="GO" id="GO:0036064">
    <property type="term" value="C:ciliary basal body"/>
    <property type="evidence" value="ECO:0000314"/>
    <property type="project" value="UniProtKB"/>
</dbReference>
<dbReference type="GO" id="GO:0005737">
    <property type="term" value="C:cytoplasm"/>
    <property type="evidence" value="ECO:0000318"/>
    <property type="project" value="GO_Central"/>
</dbReference>
<dbReference type="GO" id="GO:0005829">
    <property type="term" value="C:cytosol"/>
    <property type="evidence" value="ECO:0000250"/>
    <property type="project" value="UniProtKB"/>
</dbReference>
<dbReference type="GO" id="GO:0005794">
    <property type="term" value="C:Golgi apparatus"/>
    <property type="evidence" value="ECO:0000314"/>
    <property type="project" value="UniProtKB"/>
</dbReference>
<dbReference type="GO" id="GO:0015630">
    <property type="term" value="C:microtubule cytoskeleton"/>
    <property type="evidence" value="ECO:0000318"/>
    <property type="project" value="GO_Central"/>
</dbReference>
<dbReference type="GO" id="GO:0004181">
    <property type="term" value="F:metallocarboxypeptidase activity"/>
    <property type="evidence" value="ECO:0000250"/>
    <property type="project" value="UniProtKB"/>
</dbReference>
<dbReference type="GO" id="GO:0015631">
    <property type="term" value="F:tubulin binding"/>
    <property type="evidence" value="ECO:0000250"/>
    <property type="project" value="UniProtKB"/>
</dbReference>
<dbReference type="GO" id="GO:0008270">
    <property type="term" value="F:zinc ion binding"/>
    <property type="evidence" value="ECO:0007669"/>
    <property type="project" value="InterPro"/>
</dbReference>
<dbReference type="GO" id="GO:0098957">
    <property type="term" value="P:anterograde axonal transport of mitochondrion"/>
    <property type="evidence" value="ECO:0007669"/>
    <property type="project" value="Ensembl"/>
</dbReference>
<dbReference type="GO" id="GO:0035609">
    <property type="term" value="P:C-terminal protein deglutamylation"/>
    <property type="evidence" value="ECO:0000250"/>
    <property type="project" value="UniProtKB"/>
</dbReference>
<dbReference type="GO" id="GO:0021954">
    <property type="term" value="P:central nervous system neuron development"/>
    <property type="evidence" value="ECO:0007669"/>
    <property type="project" value="Ensembl"/>
</dbReference>
<dbReference type="GO" id="GO:0051607">
    <property type="term" value="P:defense response to virus"/>
    <property type="evidence" value="ECO:0000250"/>
    <property type="project" value="UniProtKB"/>
</dbReference>
<dbReference type="GO" id="GO:0008285">
    <property type="term" value="P:negative regulation of cell population proliferation"/>
    <property type="evidence" value="ECO:0007669"/>
    <property type="project" value="Ensembl"/>
</dbReference>
<dbReference type="GO" id="GO:2000060">
    <property type="term" value="P:positive regulation of ubiquitin-dependent protein catabolic process"/>
    <property type="evidence" value="ECO:0007669"/>
    <property type="project" value="Ensembl"/>
</dbReference>
<dbReference type="GO" id="GO:0035608">
    <property type="term" value="P:protein deglutamylation"/>
    <property type="evidence" value="ECO:0000250"/>
    <property type="project" value="UniProtKB"/>
</dbReference>
<dbReference type="GO" id="GO:0035610">
    <property type="term" value="P:protein side chain deglutamylation"/>
    <property type="evidence" value="ECO:0000250"/>
    <property type="project" value="UniProtKB"/>
</dbReference>
<dbReference type="GO" id="GO:0006508">
    <property type="term" value="P:proteolysis"/>
    <property type="evidence" value="ECO:0007669"/>
    <property type="project" value="UniProtKB-KW"/>
</dbReference>
<dbReference type="GO" id="GO:0120222">
    <property type="term" value="P:regulation of blastocyst development"/>
    <property type="evidence" value="ECO:0007669"/>
    <property type="project" value="Ensembl"/>
</dbReference>
<dbReference type="GO" id="GO:0098958">
    <property type="term" value="P:retrograde axonal transport of mitochondrion"/>
    <property type="evidence" value="ECO:0007669"/>
    <property type="project" value="Ensembl"/>
</dbReference>
<dbReference type="CDD" id="cd06908">
    <property type="entry name" value="M14_AGBL4_like"/>
    <property type="match status" value="1"/>
</dbReference>
<dbReference type="FunFam" id="3.40.630.10:FF:000062">
    <property type="entry name" value="Cytosolic carboxypeptidase 6"/>
    <property type="match status" value="1"/>
</dbReference>
<dbReference type="FunFam" id="2.60.40.3120:FF:000003">
    <property type="entry name" value="cytosolic carboxypeptidase 6 isoform X2"/>
    <property type="match status" value="1"/>
</dbReference>
<dbReference type="Gene3D" id="2.60.40.3120">
    <property type="match status" value="1"/>
</dbReference>
<dbReference type="Gene3D" id="3.40.630.10">
    <property type="entry name" value="Zn peptidases"/>
    <property type="match status" value="1"/>
</dbReference>
<dbReference type="InterPro" id="IPR050821">
    <property type="entry name" value="Cytosolic_carboxypeptidase"/>
</dbReference>
<dbReference type="InterPro" id="IPR040626">
    <property type="entry name" value="Pepdidase_M14_N"/>
</dbReference>
<dbReference type="InterPro" id="IPR000834">
    <property type="entry name" value="Peptidase_M14"/>
</dbReference>
<dbReference type="PANTHER" id="PTHR12756">
    <property type="entry name" value="CYTOSOLIC CARBOXYPEPTIDASE"/>
    <property type="match status" value="1"/>
</dbReference>
<dbReference type="PANTHER" id="PTHR12756:SF9">
    <property type="entry name" value="CYTOSOLIC CARBOXYPEPTIDASE 6"/>
    <property type="match status" value="1"/>
</dbReference>
<dbReference type="Pfam" id="PF18027">
    <property type="entry name" value="Pepdidase_M14_N"/>
    <property type="match status" value="1"/>
</dbReference>
<dbReference type="Pfam" id="PF00246">
    <property type="entry name" value="Peptidase_M14"/>
    <property type="match status" value="1"/>
</dbReference>
<dbReference type="SMART" id="SM00631">
    <property type="entry name" value="Zn_pept"/>
    <property type="match status" value="1"/>
</dbReference>
<dbReference type="SUPFAM" id="SSF53187">
    <property type="entry name" value="Zn-dependent exopeptidases"/>
    <property type="match status" value="1"/>
</dbReference>
<dbReference type="PROSITE" id="PS52035">
    <property type="entry name" value="PEPTIDASE_M14"/>
    <property type="match status" value="1"/>
</dbReference>
<reference key="1">
    <citation type="journal article" date="2004" name="Nat. Genet.">
        <title>Complete sequencing and characterization of 21,243 full-length human cDNAs.</title>
        <authorList>
            <person name="Ota T."/>
            <person name="Suzuki Y."/>
            <person name="Nishikawa T."/>
            <person name="Otsuki T."/>
            <person name="Sugiyama T."/>
            <person name="Irie R."/>
            <person name="Wakamatsu A."/>
            <person name="Hayashi K."/>
            <person name="Sato H."/>
            <person name="Nagai K."/>
            <person name="Kimura K."/>
            <person name="Makita H."/>
            <person name="Sekine M."/>
            <person name="Obayashi M."/>
            <person name="Nishi T."/>
            <person name="Shibahara T."/>
            <person name="Tanaka T."/>
            <person name="Ishii S."/>
            <person name="Yamamoto J."/>
            <person name="Saito K."/>
            <person name="Kawai Y."/>
            <person name="Isono Y."/>
            <person name="Nakamura Y."/>
            <person name="Nagahari K."/>
            <person name="Murakami K."/>
            <person name="Yasuda T."/>
            <person name="Iwayanagi T."/>
            <person name="Wagatsuma M."/>
            <person name="Shiratori A."/>
            <person name="Sudo H."/>
            <person name="Hosoiri T."/>
            <person name="Kaku Y."/>
            <person name="Kodaira H."/>
            <person name="Kondo H."/>
            <person name="Sugawara M."/>
            <person name="Takahashi M."/>
            <person name="Kanda K."/>
            <person name="Yokoi T."/>
            <person name="Furuya T."/>
            <person name="Kikkawa E."/>
            <person name="Omura Y."/>
            <person name="Abe K."/>
            <person name="Kamihara K."/>
            <person name="Katsuta N."/>
            <person name="Sato K."/>
            <person name="Tanikawa M."/>
            <person name="Yamazaki M."/>
            <person name="Ninomiya K."/>
            <person name="Ishibashi T."/>
            <person name="Yamashita H."/>
            <person name="Murakawa K."/>
            <person name="Fujimori K."/>
            <person name="Tanai H."/>
            <person name="Kimata M."/>
            <person name="Watanabe M."/>
            <person name="Hiraoka S."/>
            <person name="Chiba Y."/>
            <person name="Ishida S."/>
            <person name="Ono Y."/>
            <person name="Takiguchi S."/>
            <person name="Watanabe S."/>
            <person name="Yosida M."/>
            <person name="Hotuta T."/>
            <person name="Kusano J."/>
            <person name="Kanehori K."/>
            <person name="Takahashi-Fujii A."/>
            <person name="Hara H."/>
            <person name="Tanase T.-O."/>
            <person name="Nomura Y."/>
            <person name="Togiya S."/>
            <person name="Komai F."/>
            <person name="Hara R."/>
            <person name="Takeuchi K."/>
            <person name="Arita M."/>
            <person name="Imose N."/>
            <person name="Musashino K."/>
            <person name="Yuuki H."/>
            <person name="Oshima A."/>
            <person name="Sasaki N."/>
            <person name="Aotsuka S."/>
            <person name="Yoshikawa Y."/>
            <person name="Matsunawa H."/>
            <person name="Ichihara T."/>
            <person name="Shiohata N."/>
            <person name="Sano S."/>
            <person name="Moriya S."/>
            <person name="Momiyama H."/>
            <person name="Satoh N."/>
            <person name="Takami S."/>
            <person name="Terashima Y."/>
            <person name="Suzuki O."/>
            <person name="Nakagawa S."/>
            <person name="Senoh A."/>
            <person name="Mizoguchi H."/>
            <person name="Goto Y."/>
            <person name="Shimizu F."/>
            <person name="Wakebe H."/>
            <person name="Hishigaki H."/>
            <person name="Watanabe T."/>
            <person name="Sugiyama A."/>
            <person name="Takemoto M."/>
            <person name="Kawakami B."/>
            <person name="Yamazaki M."/>
            <person name="Watanabe K."/>
            <person name="Kumagai A."/>
            <person name="Itakura S."/>
            <person name="Fukuzumi Y."/>
            <person name="Fujimori Y."/>
            <person name="Komiyama M."/>
            <person name="Tashiro H."/>
            <person name="Tanigami A."/>
            <person name="Fujiwara T."/>
            <person name="Ono T."/>
            <person name="Yamada K."/>
            <person name="Fujii Y."/>
            <person name="Ozaki K."/>
            <person name="Hirao M."/>
            <person name="Ohmori Y."/>
            <person name="Kawabata A."/>
            <person name="Hikiji T."/>
            <person name="Kobatake N."/>
            <person name="Inagaki H."/>
            <person name="Ikema Y."/>
            <person name="Okamoto S."/>
            <person name="Okitani R."/>
            <person name="Kawakami T."/>
            <person name="Noguchi S."/>
            <person name="Itoh T."/>
            <person name="Shigeta K."/>
            <person name="Senba T."/>
            <person name="Matsumura K."/>
            <person name="Nakajima Y."/>
            <person name="Mizuno T."/>
            <person name="Morinaga M."/>
            <person name="Sasaki M."/>
            <person name="Togashi T."/>
            <person name="Oyama M."/>
            <person name="Hata H."/>
            <person name="Watanabe M."/>
            <person name="Komatsu T."/>
            <person name="Mizushima-Sugano J."/>
            <person name="Satoh T."/>
            <person name="Shirai Y."/>
            <person name="Takahashi Y."/>
            <person name="Nakagawa K."/>
            <person name="Okumura K."/>
            <person name="Nagase T."/>
            <person name="Nomura N."/>
            <person name="Kikuchi H."/>
            <person name="Masuho Y."/>
            <person name="Yamashita R."/>
            <person name="Nakai K."/>
            <person name="Yada T."/>
            <person name="Nakamura Y."/>
            <person name="Ohara O."/>
            <person name="Isogai T."/>
            <person name="Sugano S."/>
        </authorList>
    </citation>
    <scope>NUCLEOTIDE SEQUENCE [LARGE SCALE MRNA] (ISOFORMS 1 AND 2)</scope>
    <source>
        <tissue>Amygdala</tissue>
        <tissue>Brain</tissue>
    </source>
</reference>
<reference key="2">
    <citation type="journal article" date="2006" name="Nature">
        <title>The DNA sequence and biological annotation of human chromosome 1.</title>
        <authorList>
            <person name="Gregory S.G."/>
            <person name="Barlow K.F."/>
            <person name="McLay K.E."/>
            <person name="Kaul R."/>
            <person name="Swarbreck D."/>
            <person name="Dunham A."/>
            <person name="Scott C.E."/>
            <person name="Howe K.L."/>
            <person name="Woodfine K."/>
            <person name="Spencer C.C.A."/>
            <person name="Jones M.C."/>
            <person name="Gillson C."/>
            <person name="Searle S."/>
            <person name="Zhou Y."/>
            <person name="Kokocinski F."/>
            <person name="McDonald L."/>
            <person name="Evans R."/>
            <person name="Phillips K."/>
            <person name="Atkinson A."/>
            <person name="Cooper R."/>
            <person name="Jones C."/>
            <person name="Hall R.E."/>
            <person name="Andrews T.D."/>
            <person name="Lloyd C."/>
            <person name="Ainscough R."/>
            <person name="Almeida J.P."/>
            <person name="Ambrose K.D."/>
            <person name="Anderson F."/>
            <person name="Andrew R.W."/>
            <person name="Ashwell R.I.S."/>
            <person name="Aubin K."/>
            <person name="Babbage A.K."/>
            <person name="Bagguley C.L."/>
            <person name="Bailey J."/>
            <person name="Beasley H."/>
            <person name="Bethel G."/>
            <person name="Bird C.P."/>
            <person name="Bray-Allen S."/>
            <person name="Brown J.Y."/>
            <person name="Brown A.J."/>
            <person name="Buckley D."/>
            <person name="Burton J."/>
            <person name="Bye J."/>
            <person name="Carder C."/>
            <person name="Chapman J.C."/>
            <person name="Clark S.Y."/>
            <person name="Clarke G."/>
            <person name="Clee C."/>
            <person name="Cobley V."/>
            <person name="Collier R.E."/>
            <person name="Corby N."/>
            <person name="Coville G.J."/>
            <person name="Davies J."/>
            <person name="Deadman R."/>
            <person name="Dunn M."/>
            <person name="Earthrowl M."/>
            <person name="Ellington A.G."/>
            <person name="Errington H."/>
            <person name="Frankish A."/>
            <person name="Frankland J."/>
            <person name="French L."/>
            <person name="Garner P."/>
            <person name="Garnett J."/>
            <person name="Gay L."/>
            <person name="Ghori M.R.J."/>
            <person name="Gibson R."/>
            <person name="Gilby L.M."/>
            <person name="Gillett W."/>
            <person name="Glithero R.J."/>
            <person name="Grafham D.V."/>
            <person name="Griffiths C."/>
            <person name="Griffiths-Jones S."/>
            <person name="Grocock R."/>
            <person name="Hammond S."/>
            <person name="Harrison E.S.I."/>
            <person name="Hart E."/>
            <person name="Haugen E."/>
            <person name="Heath P.D."/>
            <person name="Holmes S."/>
            <person name="Holt K."/>
            <person name="Howden P.J."/>
            <person name="Hunt A.R."/>
            <person name="Hunt S.E."/>
            <person name="Hunter G."/>
            <person name="Isherwood J."/>
            <person name="James R."/>
            <person name="Johnson C."/>
            <person name="Johnson D."/>
            <person name="Joy A."/>
            <person name="Kay M."/>
            <person name="Kershaw J.K."/>
            <person name="Kibukawa M."/>
            <person name="Kimberley A.M."/>
            <person name="King A."/>
            <person name="Knights A.J."/>
            <person name="Lad H."/>
            <person name="Laird G."/>
            <person name="Lawlor S."/>
            <person name="Leongamornlert D.A."/>
            <person name="Lloyd D.M."/>
            <person name="Loveland J."/>
            <person name="Lovell J."/>
            <person name="Lush M.J."/>
            <person name="Lyne R."/>
            <person name="Martin S."/>
            <person name="Mashreghi-Mohammadi M."/>
            <person name="Matthews L."/>
            <person name="Matthews N.S.W."/>
            <person name="McLaren S."/>
            <person name="Milne S."/>
            <person name="Mistry S."/>
            <person name="Moore M.J.F."/>
            <person name="Nickerson T."/>
            <person name="O'Dell C.N."/>
            <person name="Oliver K."/>
            <person name="Palmeiri A."/>
            <person name="Palmer S.A."/>
            <person name="Parker A."/>
            <person name="Patel D."/>
            <person name="Pearce A.V."/>
            <person name="Peck A.I."/>
            <person name="Pelan S."/>
            <person name="Phelps K."/>
            <person name="Phillimore B.J."/>
            <person name="Plumb R."/>
            <person name="Rajan J."/>
            <person name="Raymond C."/>
            <person name="Rouse G."/>
            <person name="Saenphimmachak C."/>
            <person name="Sehra H.K."/>
            <person name="Sheridan E."/>
            <person name="Shownkeen R."/>
            <person name="Sims S."/>
            <person name="Skuce C.D."/>
            <person name="Smith M."/>
            <person name="Steward C."/>
            <person name="Subramanian S."/>
            <person name="Sycamore N."/>
            <person name="Tracey A."/>
            <person name="Tromans A."/>
            <person name="Van Helmond Z."/>
            <person name="Wall M."/>
            <person name="Wallis J.M."/>
            <person name="White S."/>
            <person name="Whitehead S.L."/>
            <person name="Wilkinson J.E."/>
            <person name="Willey D.L."/>
            <person name="Williams H."/>
            <person name="Wilming L."/>
            <person name="Wray P.W."/>
            <person name="Wu Z."/>
            <person name="Coulson A."/>
            <person name="Vaudin M."/>
            <person name="Sulston J.E."/>
            <person name="Durbin R.M."/>
            <person name="Hubbard T."/>
            <person name="Wooster R."/>
            <person name="Dunham I."/>
            <person name="Carter N.P."/>
            <person name="McVean G."/>
            <person name="Ross M.T."/>
            <person name="Harrow J."/>
            <person name="Olson M.V."/>
            <person name="Beck S."/>
            <person name="Rogers J."/>
            <person name="Bentley D.R."/>
        </authorList>
    </citation>
    <scope>NUCLEOTIDE SEQUENCE [LARGE SCALE GENOMIC DNA]</scope>
</reference>
<reference key="3">
    <citation type="journal article" date="2013" name="FASEB J.">
        <title>Functional segregation and emerging role of cilia-related cytosolic carboxypeptidases (CCPs).</title>
        <authorList>
            <person name="Rodriguez de la Vega Otazo M."/>
            <person name="Lorenzo J."/>
            <person name="Tort O."/>
            <person name="Aviles F.X."/>
            <person name="Bautista J.M."/>
        </authorList>
    </citation>
    <scope>SUBCELLULAR LOCATION</scope>
</reference>
<reference key="4">
    <citation type="journal article" date="2018" name="Nat. Commun.">
        <title>Klf4 glutamylation is required for cell reprogramming and early embryonic development in mice.</title>
        <authorList>
            <person name="Ye B."/>
            <person name="Liu B."/>
            <person name="Hao L."/>
            <person name="Zhu X."/>
            <person name="Yang L."/>
            <person name="Wang S."/>
            <person name="Xia P."/>
            <person name="Du Y."/>
            <person name="Meng S."/>
            <person name="Huang G."/>
            <person name="Qin X."/>
            <person name="Wang Y."/>
            <person name="Yan X."/>
            <person name="Li C."/>
            <person name="Hao J."/>
            <person name="Zhu P."/>
            <person name="He L."/>
            <person name="Tian Y."/>
            <person name="Fan Z."/>
        </authorList>
    </citation>
    <scope>FUNCTION</scope>
</reference>
<feature type="chain" id="PRO_0000284835" description="Cytosolic carboxypeptidase 6">
    <location>
        <begin position="1"/>
        <end position="503"/>
    </location>
</feature>
<feature type="domain" description="Peptidase M14" evidence="4">
    <location>
        <begin position="167"/>
        <end position="438"/>
    </location>
</feature>
<feature type="region of interest" description="Disordered" evidence="5">
    <location>
        <begin position="459"/>
        <end position="503"/>
    </location>
</feature>
<feature type="compositionally biased region" description="Basic and acidic residues" evidence="5">
    <location>
        <begin position="459"/>
        <end position="469"/>
    </location>
</feature>
<feature type="compositionally biased region" description="Basic and acidic residues" evidence="5">
    <location>
        <begin position="487"/>
        <end position="503"/>
    </location>
</feature>
<feature type="active site" description="Proton donor/acceptor" evidence="4">
    <location>
        <position position="401"/>
    </location>
</feature>
<feature type="binding site" evidence="4">
    <location>
        <position position="230"/>
    </location>
    <ligand>
        <name>Zn(2+)</name>
        <dbReference type="ChEBI" id="CHEBI:29105"/>
        <note>catalytic</note>
    </ligand>
</feature>
<feature type="binding site" evidence="4">
    <location>
        <position position="233"/>
    </location>
    <ligand>
        <name>Zn(2+)</name>
        <dbReference type="ChEBI" id="CHEBI:29105"/>
        <note>catalytic</note>
    </ligand>
</feature>
<feature type="binding site" evidence="4">
    <location>
        <position position="328"/>
    </location>
    <ligand>
        <name>Zn(2+)</name>
        <dbReference type="ChEBI" id="CHEBI:29105"/>
        <note>catalytic</note>
    </ligand>
</feature>
<feature type="splice variant" id="VSP_040435" description="In isoform 2." evidence="8">
    <original>Q</original>
    <variation>QVREIVDTFRVVL</variation>
    <location>
        <position position="94"/>
    </location>
</feature>
<feature type="splice variant" id="VSP_040436" description="In isoform 2." evidence="8">
    <location>
        <begin position="455"/>
        <end position="463"/>
    </location>
</feature>
<feature type="sequence variant" id="VAR_061078" description="In dbSNP:rs60977321.">
    <original>V</original>
    <variation>M</variation>
    <location>
        <position position="443"/>
    </location>
</feature>
<feature type="sequence conflict" description="In Ref. 1; BAG57648." evidence="9" ref="1">
    <original>S</original>
    <variation>L</variation>
    <location>
        <position position="237"/>
    </location>
</feature>
<feature type="sequence conflict" description="In Ref. 1; BAG57648." evidence="9" ref="1">
    <original>K</original>
    <variation>R</variation>
    <location>
        <position position="490"/>
    </location>
</feature>